<evidence type="ECO:0000250" key="1"/>
<evidence type="ECO:0000305" key="2"/>
<feature type="chain" id="PRO_0000338482" description="Nuclease SbcCD subunit D">
    <location>
        <begin position="1"/>
        <end position="373"/>
    </location>
</feature>
<keyword id="KW-0233">DNA recombination</keyword>
<keyword id="KW-0235">DNA replication</keyword>
<keyword id="KW-0255">Endonuclease</keyword>
<keyword id="KW-0269">Exonuclease</keyword>
<keyword id="KW-0378">Hydrolase</keyword>
<keyword id="KW-0540">Nuclease</keyword>
<accession>Q6GH61</accession>
<protein>
    <recommendedName>
        <fullName>Nuclease SbcCD subunit D</fullName>
    </recommendedName>
</protein>
<organism>
    <name type="scientific">Staphylococcus aureus (strain MRSA252)</name>
    <dbReference type="NCBI Taxonomy" id="282458"/>
    <lineage>
        <taxon>Bacteria</taxon>
        <taxon>Bacillati</taxon>
        <taxon>Bacillota</taxon>
        <taxon>Bacilli</taxon>
        <taxon>Bacillales</taxon>
        <taxon>Staphylococcaceae</taxon>
        <taxon>Staphylococcus</taxon>
    </lineage>
</organism>
<gene>
    <name type="primary">sbcD</name>
    <name type="ordered locus">SAR1356</name>
</gene>
<comment type="function">
    <text evidence="1">SbcCD cleaves DNA hairpin structures. These structures can inhibit DNA replication and are intermediates in certain DNA recombination reactions. The complex acts as a 3'-&gt;5' double strand exonuclease that can open hairpins. It also has a 5' single-strand endonuclease activity (By similarity).</text>
</comment>
<comment type="subunit">
    <text evidence="1">Heterodimer of SbcC and SbcD.</text>
</comment>
<comment type="similarity">
    <text evidence="2">Belongs to the SbcD family.</text>
</comment>
<sequence>MKIIHTADWHLGKILNGKQLLEDQAYILDMFVEKMKEEEPDIIVIAGDLYDTTYPSKDAIMLLEQAIGKLNLELRIPIIMISGNHDGKERLNYGASWFENNQLFIRTDFTSINSPIEINGVNFYTLPYATVSEMKHYFEDDTIETHQQGITRCIETIAPEIDEGAINILISHLTVQGGKTSDSERPLTIGTVESVQKGVFDIFDYVMLGHLHHPFSIEDDKIKYSGSLLQYSFSEAGQAKGYRRVTINDGIINDVFIPLKPLRQLEIISGEYNDVINEKVHVKNKDNYLHFKLKNMSHITDPMMSLKQIYPNTLALTNETFSYNEENNAIEISEKDDMSIIEMFYNHITDKELSDIQSNKIKNILENELRKED</sequence>
<proteinExistence type="inferred from homology"/>
<name>SBCD_STAAR</name>
<reference key="1">
    <citation type="journal article" date="2004" name="Proc. Natl. Acad. Sci. U.S.A.">
        <title>Complete genomes of two clinical Staphylococcus aureus strains: evidence for the rapid evolution of virulence and drug resistance.</title>
        <authorList>
            <person name="Holden M.T.G."/>
            <person name="Feil E.J."/>
            <person name="Lindsay J.A."/>
            <person name="Peacock S.J."/>
            <person name="Day N.P.J."/>
            <person name="Enright M.C."/>
            <person name="Foster T.J."/>
            <person name="Moore C.E."/>
            <person name="Hurst L."/>
            <person name="Atkin R."/>
            <person name="Barron A."/>
            <person name="Bason N."/>
            <person name="Bentley S.D."/>
            <person name="Chillingworth C."/>
            <person name="Chillingworth T."/>
            <person name="Churcher C."/>
            <person name="Clark L."/>
            <person name="Corton C."/>
            <person name="Cronin A."/>
            <person name="Doggett J."/>
            <person name="Dowd L."/>
            <person name="Feltwell T."/>
            <person name="Hance Z."/>
            <person name="Harris B."/>
            <person name="Hauser H."/>
            <person name="Holroyd S."/>
            <person name="Jagels K."/>
            <person name="James K.D."/>
            <person name="Lennard N."/>
            <person name="Line A."/>
            <person name="Mayes R."/>
            <person name="Moule S."/>
            <person name="Mungall K."/>
            <person name="Ormond D."/>
            <person name="Quail M.A."/>
            <person name="Rabbinowitsch E."/>
            <person name="Rutherford K.M."/>
            <person name="Sanders M."/>
            <person name="Sharp S."/>
            <person name="Simmonds M."/>
            <person name="Stevens K."/>
            <person name="Whitehead S."/>
            <person name="Barrell B.G."/>
            <person name="Spratt B.G."/>
            <person name="Parkhill J."/>
        </authorList>
    </citation>
    <scope>NUCLEOTIDE SEQUENCE [LARGE SCALE GENOMIC DNA]</scope>
    <source>
        <strain>MRSA252</strain>
    </source>
</reference>
<dbReference type="EMBL" id="BX571856">
    <property type="protein sequence ID" value="CAG40354.1"/>
    <property type="molecule type" value="Genomic_DNA"/>
</dbReference>
<dbReference type="RefSeq" id="WP_000691309.1">
    <property type="nucleotide sequence ID" value="NC_002952.2"/>
</dbReference>
<dbReference type="SMR" id="Q6GH61"/>
<dbReference type="KEGG" id="sar:SAR1356"/>
<dbReference type="HOGENOM" id="CLU_038045_0_1_9"/>
<dbReference type="Proteomes" id="UP000000596">
    <property type="component" value="Chromosome"/>
</dbReference>
<dbReference type="GO" id="GO:0008408">
    <property type="term" value="F:3'-5' exonuclease activity"/>
    <property type="evidence" value="ECO:0007669"/>
    <property type="project" value="InterPro"/>
</dbReference>
<dbReference type="GO" id="GO:0004519">
    <property type="term" value="F:endonuclease activity"/>
    <property type="evidence" value="ECO:0007669"/>
    <property type="project" value="UniProtKB-KW"/>
</dbReference>
<dbReference type="GO" id="GO:0006310">
    <property type="term" value="P:DNA recombination"/>
    <property type="evidence" value="ECO:0007669"/>
    <property type="project" value="UniProtKB-KW"/>
</dbReference>
<dbReference type="GO" id="GO:0006260">
    <property type="term" value="P:DNA replication"/>
    <property type="evidence" value="ECO:0007669"/>
    <property type="project" value="UniProtKB-KW"/>
</dbReference>
<dbReference type="CDD" id="cd00840">
    <property type="entry name" value="MPP_Mre11_N"/>
    <property type="match status" value="1"/>
</dbReference>
<dbReference type="Gene3D" id="3.60.21.10">
    <property type="match status" value="1"/>
</dbReference>
<dbReference type="InterPro" id="IPR004843">
    <property type="entry name" value="Calcineurin-like_PHP_ApaH"/>
</dbReference>
<dbReference type="InterPro" id="IPR050535">
    <property type="entry name" value="DNA_Repair-Maintenance_Comp"/>
</dbReference>
<dbReference type="InterPro" id="IPR029052">
    <property type="entry name" value="Metallo-depent_PP-like"/>
</dbReference>
<dbReference type="InterPro" id="IPR041796">
    <property type="entry name" value="Mre11_N"/>
</dbReference>
<dbReference type="InterPro" id="IPR053381">
    <property type="entry name" value="SbcCD_nuclease"/>
</dbReference>
<dbReference type="InterPro" id="IPR004593">
    <property type="entry name" value="SbcD"/>
</dbReference>
<dbReference type="InterPro" id="IPR026843">
    <property type="entry name" value="SbcD_C"/>
</dbReference>
<dbReference type="NCBIfam" id="TIGR00619">
    <property type="entry name" value="sbcd"/>
    <property type="match status" value="1"/>
</dbReference>
<dbReference type="NCBIfam" id="NF041753">
    <property type="entry name" value="sbcd_Staph"/>
    <property type="match status" value="1"/>
</dbReference>
<dbReference type="PANTHER" id="PTHR30337">
    <property type="entry name" value="COMPONENT OF ATP-DEPENDENT DSDNA EXONUCLEASE"/>
    <property type="match status" value="1"/>
</dbReference>
<dbReference type="PANTHER" id="PTHR30337:SF0">
    <property type="entry name" value="NUCLEASE SBCCD SUBUNIT D"/>
    <property type="match status" value="1"/>
</dbReference>
<dbReference type="Pfam" id="PF00149">
    <property type="entry name" value="Metallophos"/>
    <property type="match status" value="1"/>
</dbReference>
<dbReference type="Pfam" id="PF12320">
    <property type="entry name" value="SbcD_C"/>
    <property type="match status" value="1"/>
</dbReference>
<dbReference type="SUPFAM" id="SSF56300">
    <property type="entry name" value="Metallo-dependent phosphatases"/>
    <property type="match status" value="1"/>
</dbReference>